<gene>
    <name type="primary">fapR</name>
    <name type="synonym">ylpC</name>
    <name type="ordered locus">BSU15880</name>
</gene>
<reference key="1">
    <citation type="journal article" date="1998" name="Microbiology">
        <title>A 28 kbp segment from the spoVM region of the Bacillus subtilis 168 genome.</title>
        <authorList>
            <person name="Foulger D."/>
            <person name="Errington J."/>
        </authorList>
    </citation>
    <scope>NUCLEOTIDE SEQUENCE [GENOMIC DNA]</scope>
    <source>
        <strain>168</strain>
    </source>
</reference>
<reference key="2">
    <citation type="journal article" date="1997" name="Nature">
        <title>The complete genome sequence of the Gram-positive bacterium Bacillus subtilis.</title>
        <authorList>
            <person name="Kunst F."/>
            <person name="Ogasawara N."/>
            <person name="Moszer I."/>
            <person name="Albertini A.M."/>
            <person name="Alloni G."/>
            <person name="Azevedo V."/>
            <person name="Bertero M.G."/>
            <person name="Bessieres P."/>
            <person name="Bolotin A."/>
            <person name="Borchert S."/>
            <person name="Borriss R."/>
            <person name="Boursier L."/>
            <person name="Brans A."/>
            <person name="Braun M."/>
            <person name="Brignell S.C."/>
            <person name="Bron S."/>
            <person name="Brouillet S."/>
            <person name="Bruschi C.V."/>
            <person name="Caldwell B."/>
            <person name="Capuano V."/>
            <person name="Carter N.M."/>
            <person name="Choi S.-K."/>
            <person name="Codani J.-J."/>
            <person name="Connerton I.F."/>
            <person name="Cummings N.J."/>
            <person name="Daniel R.A."/>
            <person name="Denizot F."/>
            <person name="Devine K.M."/>
            <person name="Duesterhoeft A."/>
            <person name="Ehrlich S.D."/>
            <person name="Emmerson P.T."/>
            <person name="Entian K.-D."/>
            <person name="Errington J."/>
            <person name="Fabret C."/>
            <person name="Ferrari E."/>
            <person name="Foulger D."/>
            <person name="Fritz C."/>
            <person name="Fujita M."/>
            <person name="Fujita Y."/>
            <person name="Fuma S."/>
            <person name="Galizzi A."/>
            <person name="Galleron N."/>
            <person name="Ghim S.-Y."/>
            <person name="Glaser P."/>
            <person name="Goffeau A."/>
            <person name="Golightly E.J."/>
            <person name="Grandi G."/>
            <person name="Guiseppi G."/>
            <person name="Guy B.J."/>
            <person name="Haga K."/>
            <person name="Haiech J."/>
            <person name="Harwood C.R."/>
            <person name="Henaut A."/>
            <person name="Hilbert H."/>
            <person name="Holsappel S."/>
            <person name="Hosono S."/>
            <person name="Hullo M.-F."/>
            <person name="Itaya M."/>
            <person name="Jones L.-M."/>
            <person name="Joris B."/>
            <person name="Karamata D."/>
            <person name="Kasahara Y."/>
            <person name="Klaerr-Blanchard M."/>
            <person name="Klein C."/>
            <person name="Kobayashi Y."/>
            <person name="Koetter P."/>
            <person name="Koningstein G."/>
            <person name="Krogh S."/>
            <person name="Kumano M."/>
            <person name="Kurita K."/>
            <person name="Lapidus A."/>
            <person name="Lardinois S."/>
            <person name="Lauber J."/>
            <person name="Lazarevic V."/>
            <person name="Lee S.-M."/>
            <person name="Levine A."/>
            <person name="Liu H."/>
            <person name="Masuda S."/>
            <person name="Mauel C."/>
            <person name="Medigue C."/>
            <person name="Medina N."/>
            <person name="Mellado R.P."/>
            <person name="Mizuno M."/>
            <person name="Moestl D."/>
            <person name="Nakai S."/>
            <person name="Noback M."/>
            <person name="Noone D."/>
            <person name="O'Reilly M."/>
            <person name="Ogawa K."/>
            <person name="Ogiwara A."/>
            <person name="Oudega B."/>
            <person name="Park S.-H."/>
            <person name="Parro V."/>
            <person name="Pohl T.M."/>
            <person name="Portetelle D."/>
            <person name="Porwollik S."/>
            <person name="Prescott A.M."/>
            <person name="Presecan E."/>
            <person name="Pujic P."/>
            <person name="Purnelle B."/>
            <person name="Rapoport G."/>
            <person name="Rey M."/>
            <person name="Reynolds S."/>
            <person name="Rieger M."/>
            <person name="Rivolta C."/>
            <person name="Rocha E."/>
            <person name="Roche B."/>
            <person name="Rose M."/>
            <person name="Sadaie Y."/>
            <person name="Sato T."/>
            <person name="Scanlan E."/>
            <person name="Schleich S."/>
            <person name="Schroeter R."/>
            <person name="Scoffone F."/>
            <person name="Sekiguchi J."/>
            <person name="Sekowska A."/>
            <person name="Seror S.J."/>
            <person name="Serror P."/>
            <person name="Shin B.-S."/>
            <person name="Soldo B."/>
            <person name="Sorokin A."/>
            <person name="Tacconi E."/>
            <person name="Takagi T."/>
            <person name="Takahashi H."/>
            <person name="Takemaru K."/>
            <person name="Takeuchi M."/>
            <person name="Tamakoshi A."/>
            <person name="Tanaka T."/>
            <person name="Terpstra P."/>
            <person name="Tognoni A."/>
            <person name="Tosato V."/>
            <person name="Uchiyama S."/>
            <person name="Vandenbol M."/>
            <person name="Vannier F."/>
            <person name="Vassarotti A."/>
            <person name="Viari A."/>
            <person name="Wambutt R."/>
            <person name="Wedler E."/>
            <person name="Wedler H."/>
            <person name="Weitzenegger T."/>
            <person name="Winters P."/>
            <person name="Wipat A."/>
            <person name="Yamamoto H."/>
            <person name="Yamane K."/>
            <person name="Yasumoto K."/>
            <person name="Yata K."/>
            <person name="Yoshida K."/>
            <person name="Yoshikawa H.-F."/>
            <person name="Zumstein E."/>
            <person name="Yoshikawa H."/>
            <person name="Danchin A."/>
        </authorList>
    </citation>
    <scope>NUCLEOTIDE SEQUENCE [LARGE SCALE GENOMIC DNA]</scope>
    <source>
        <strain>168</strain>
    </source>
</reference>
<reference key="3">
    <citation type="journal article" date="2003" name="Dev. Cell">
        <title>FapR, a bacterial transcription factor involved in global regulation of membrane lipid biosynthesis.</title>
        <authorList>
            <person name="Schujman G.E."/>
            <person name="Paoletti L."/>
            <person name="Grossman A.D."/>
            <person name="de Mendoza D."/>
        </authorList>
    </citation>
    <scope>PROTEIN SEQUENCE OF 1-9</scope>
    <scope>FUNCTION</scope>
    <scope>DNA-BINDING</scope>
    <scope>INDUCTION</scope>
</reference>
<sequence>MRRNKRERQELLQQTIQATPFITDEELAGKFGVSIQTIRLDRLELSIPELRERIKNVAEKTLEDEVKSLSLDEVIGEIIDLELDDQAISILEIKQEHVFSRNQIARGHHLFAQANSLAVAVIDDELALTASADIRFTRQVKQGERVVAKAKVTAVEKEKGRTVVEVNSYVGEEIVFSGRFDMYRSKHS</sequence>
<proteinExistence type="evidence at protein level"/>
<name>FAPR_BACSU</name>
<keyword id="KW-0002">3D-structure</keyword>
<keyword id="KW-0903">Direct protein sequencing</keyword>
<keyword id="KW-0238">DNA-binding</keyword>
<keyword id="KW-0275">Fatty acid biosynthesis</keyword>
<keyword id="KW-0276">Fatty acid metabolism</keyword>
<keyword id="KW-0444">Lipid biosynthesis</keyword>
<keyword id="KW-0443">Lipid metabolism</keyword>
<keyword id="KW-1185">Reference proteome</keyword>
<keyword id="KW-0678">Repressor</keyword>
<keyword id="KW-0804">Transcription</keyword>
<keyword id="KW-0805">Transcription regulation</keyword>
<feature type="chain" id="PRO_0000172819" description="Transcription factor FapR">
    <location>
        <begin position="1"/>
        <end position="188"/>
    </location>
</feature>
<feature type="helix" evidence="3">
    <location>
        <begin position="47"/>
        <end position="63"/>
    </location>
</feature>
<feature type="helix" evidence="3">
    <location>
        <begin position="71"/>
        <end position="73"/>
    </location>
</feature>
<feature type="strand" evidence="4">
    <location>
        <begin position="75"/>
        <end position="82"/>
    </location>
</feature>
<feature type="turn" evidence="4">
    <location>
        <begin position="83"/>
        <end position="85"/>
    </location>
</feature>
<feature type="strand" evidence="4">
    <location>
        <begin position="86"/>
        <end position="92"/>
    </location>
</feature>
<feature type="helix" evidence="4">
    <location>
        <begin position="95"/>
        <end position="97"/>
    </location>
</feature>
<feature type="turn" evidence="3">
    <location>
        <begin position="100"/>
        <end position="102"/>
    </location>
</feature>
<feature type="helix" evidence="4">
    <location>
        <begin position="107"/>
        <end position="120"/>
    </location>
</feature>
<feature type="strand" evidence="4">
    <location>
        <begin position="129"/>
        <end position="136"/>
    </location>
</feature>
<feature type="strand" evidence="4">
    <location>
        <begin position="145"/>
        <end position="155"/>
    </location>
</feature>
<feature type="strand" evidence="4">
    <location>
        <begin position="157"/>
        <end position="160"/>
    </location>
</feature>
<feature type="strand" evidence="4">
    <location>
        <begin position="162"/>
        <end position="170"/>
    </location>
</feature>
<feature type="strand" evidence="4">
    <location>
        <begin position="173"/>
        <end position="182"/>
    </location>
</feature>
<comment type="function">
    <text evidence="1">Transcription factor involved in regulation of membrane lipid biosynthesis by repressing genes involved in fatty acid and phospholipid metabolism. Binds to the 5'-TTAGTANNNNNTANTAA-3' consensus sequence found in the promoter of fabHAF operon (containing fabHA and fabF genes), yhdO and fapR genes and prevents their expression. Its action is probably modulated by malonyl-CoA.</text>
</comment>
<comment type="induction">
    <text evidence="1">Autoregulated.</text>
</comment>
<comment type="similarity">
    <text evidence="2">Belongs to the FapR family.</text>
</comment>
<protein>
    <recommendedName>
        <fullName>Transcription factor FapR</fullName>
    </recommendedName>
    <alternativeName>
        <fullName>Fatty acid and phospholipid biosynthesis regulator</fullName>
    </alternativeName>
</protein>
<dbReference type="EMBL" id="Y13937">
    <property type="protein sequence ID" value="CAA74247.1"/>
    <property type="molecule type" value="Genomic_DNA"/>
</dbReference>
<dbReference type="EMBL" id="AL009126">
    <property type="protein sequence ID" value="CAB13461.1"/>
    <property type="molecule type" value="Genomic_DNA"/>
</dbReference>
<dbReference type="PIR" id="A69880">
    <property type="entry name" value="A69880"/>
</dbReference>
<dbReference type="RefSeq" id="NP_389470.1">
    <property type="nucleotide sequence ID" value="NC_000964.3"/>
</dbReference>
<dbReference type="RefSeq" id="WP_003232044.1">
    <property type="nucleotide sequence ID" value="NZ_OZ025638.1"/>
</dbReference>
<dbReference type="PDB" id="2F3X">
    <property type="method" value="X-ray"/>
    <property type="resolution" value="3.10 A"/>
    <property type="chains" value="A/B=44-188"/>
</dbReference>
<dbReference type="PDB" id="2F41">
    <property type="method" value="X-ray"/>
    <property type="resolution" value="2.50 A"/>
    <property type="chains" value="A/B/C/D=68-188"/>
</dbReference>
<dbReference type="PDBsum" id="2F3X"/>
<dbReference type="PDBsum" id="2F41"/>
<dbReference type="SMR" id="O34835"/>
<dbReference type="FunCoup" id="O34835">
    <property type="interactions" value="16"/>
</dbReference>
<dbReference type="IntAct" id="O34835">
    <property type="interactions" value="6"/>
</dbReference>
<dbReference type="STRING" id="224308.BSU15880"/>
<dbReference type="PaxDb" id="224308-BSU15880"/>
<dbReference type="EnsemblBacteria" id="CAB13461">
    <property type="protein sequence ID" value="CAB13461"/>
    <property type="gene ID" value="BSU_15880"/>
</dbReference>
<dbReference type="GeneID" id="86873903"/>
<dbReference type="GeneID" id="936595"/>
<dbReference type="KEGG" id="bsu:BSU15880"/>
<dbReference type="PATRIC" id="fig|224308.179.peg.1728"/>
<dbReference type="eggNOG" id="COG1349">
    <property type="taxonomic scope" value="Bacteria"/>
</dbReference>
<dbReference type="eggNOG" id="COG2050">
    <property type="taxonomic scope" value="Bacteria"/>
</dbReference>
<dbReference type="InParanoid" id="O34835"/>
<dbReference type="OrthoDB" id="1706183at2"/>
<dbReference type="PhylomeDB" id="O34835"/>
<dbReference type="BioCyc" id="BSUB:BSU15880-MONOMER"/>
<dbReference type="EvolutionaryTrace" id="O34835"/>
<dbReference type="Proteomes" id="UP000001570">
    <property type="component" value="Chromosome"/>
</dbReference>
<dbReference type="GO" id="GO:0003677">
    <property type="term" value="F:DNA binding"/>
    <property type="evidence" value="ECO:0007669"/>
    <property type="project" value="UniProtKB-KW"/>
</dbReference>
<dbReference type="GO" id="GO:0003700">
    <property type="term" value="F:DNA-binding transcription factor activity"/>
    <property type="evidence" value="ECO:0007669"/>
    <property type="project" value="UniProtKB-UniRule"/>
</dbReference>
<dbReference type="GO" id="GO:0006633">
    <property type="term" value="P:fatty acid biosynthetic process"/>
    <property type="evidence" value="ECO:0007669"/>
    <property type="project" value="UniProtKB-KW"/>
</dbReference>
<dbReference type="GO" id="GO:0045892">
    <property type="term" value="P:negative regulation of DNA-templated transcription"/>
    <property type="evidence" value="ECO:0007669"/>
    <property type="project" value="UniProtKB-UniRule"/>
</dbReference>
<dbReference type="GO" id="GO:0045717">
    <property type="term" value="P:negative regulation of fatty acid biosynthetic process"/>
    <property type="evidence" value="ECO:0007669"/>
    <property type="project" value="UniProtKB-UniRule"/>
</dbReference>
<dbReference type="CDD" id="cd03440">
    <property type="entry name" value="hot_dog"/>
    <property type="match status" value="1"/>
</dbReference>
<dbReference type="Gene3D" id="3.10.129.10">
    <property type="entry name" value="Hotdog Thioesterase"/>
    <property type="match status" value="1"/>
</dbReference>
<dbReference type="Gene3D" id="1.10.10.10">
    <property type="entry name" value="Winged helix-like DNA-binding domain superfamily/Winged helix DNA-binding domain"/>
    <property type="match status" value="1"/>
</dbReference>
<dbReference type="HAMAP" id="MF_01814">
    <property type="entry name" value="Transcrip_fact_FapR"/>
    <property type="match status" value="1"/>
</dbReference>
<dbReference type="InterPro" id="IPR029069">
    <property type="entry name" value="HotDog_dom_sf"/>
</dbReference>
<dbReference type="InterPro" id="IPR006683">
    <property type="entry name" value="Thioestr_dom"/>
</dbReference>
<dbReference type="InterPro" id="IPR017275">
    <property type="entry name" value="Transcription_factor_FapR"/>
</dbReference>
<dbReference type="InterPro" id="IPR036388">
    <property type="entry name" value="WH-like_DNA-bd_sf"/>
</dbReference>
<dbReference type="NCBIfam" id="NF003359">
    <property type="entry name" value="PRK04424.1"/>
    <property type="match status" value="1"/>
</dbReference>
<dbReference type="Pfam" id="PF03061">
    <property type="entry name" value="4HBT"/>
    <property type="match status" value="1"/>
</dbReference>
<dbReference type="PIRSF" id="PIRSF037733">
    <property type="entry name" value="Transcription_factor_FapR"/>
    <property type="match status" value="1"/>
</dbReference>
<dbReference type="SUPFAM" id="SSF54637">
    <property type="entry name" value="Thioesterase/thiol ester dehydrase-isomerase"/>
    <property type="match status" value="1"/>
</dbReference>
<organism>
    <name type="scientific">Bacillus subtilis (strain 168)</name>
    <dbReference type="NCBI Taxonomy" id="224308"/>
    <lineage>
        <taxon>Bacteria</taxon>
        <taxon>Bacillati</taxon>
        <taxon>Bacillota</taxon>
        <taxon>Bacilli</taxon>
        <taxon>Bacillales</taxon>
        <taxon>Bacillaceae</taxon>
        <taxon>Bacillus</taxon>
    </lineage>
</organism>
<accession>O34835</accession>
<evidence type="ECO:0000269" key="1">
    <source>
    </source>
</evidence>
<evidence type="ECO:0000305" key="2"/>
<evidence type="ECO:0007829" key="3">
    <source>
        <dbReference type="PDB" id="2F3X"/>
    </source>
</evidence>
<evidence type="ECO:0007829" key="4">
    <source>
        <dbReference type="PDB" id="2F41"/>
    </source>
</evidence>